<gene>
    <name type="ordered locus">NGR_a03350</name>
    <name type="ORF">y4hO</name>
</gene>
<evidence type="ECO:0000305" key="1"/>
<sequence>MLPSGQNVRVWIATGHTDMRCGFPSLALRVQEVLKLNPLDGNLFVFRGRSGSLLKVIWSDGQGSCLFTKRLDRGRFVWPSAEGGAIAISPAQLSYLLSGIDWRHPQETWRPTKVG</sequence>
<accession>P50359</accession>
<protein>
    <recommendedName>
        <fullName>Uncharacterized protein y4hO</fullName>
    </recommendedName>
</protein>
<comment type="similarity">
    <text evidence="1">Belongs to the transposase 34 family.</text>
</comment>
<comment type="sequence caution" evidence="1">
    <conflict type="erroneous initiation">
        <sequence resource="EMBL-CDS" id="CAA52196"/>
    </conflict>
</comment>
<proteinExistence type="inferred from homology"/>
<feature type="chain" id="PRO_0000200852" description="Uncharacterized protein y4hO">
    <location>
        <begin position="1"/>
        <end position="115"/>
    </location>
</feature>
<organism>
    <name type="scientific">Sinorhizobium fredii (strain NBRC 101917 / NGR234)</name>
    <dbReference type="NCBI Taxonomy" id="394"/>
    <lineage>
        <taxon>Bacteria</taxon>
        <taxon>Pseudomonadati</taxon>
        <taxon>Pseudomonadota</taxon>
        <taxon>Alphaproteobacteria</taxon>
        <taxon>Hyphomicrobiales</taxon>
        <taxon>Rhizobiaceae</taxon>
        <taxon>Sinorhizobium/Ensifer group</taxon>
        <taxon>Sinorhizobium</taxon>
    </lineage>
</organism>
<name>Y4HO_SINFN</name>
<geneLocation type="plasmid">
    <name>sym pNGR234a</name>
</geneLocation>
<dbReference type="EMBL" id="X74068">
    <property type="protein sequence ID" value="CAA52196.1"/>
    <property type="status" value="ALT_INIT"/>
    <property type="molecule type" value="Genomic_DNA"/>
</dbReference>
<dbReference type="EMBL" id="U00090">
    <property type="protein sequence ID" value="AAB92453.1"/>
    <property type="molecule type" value="Genomic_DNA"/>
</dbReference>
<dbReference type="PIR" id="S34667">
    <property type="entry name" value="S34667"/>
</dbReference>
<dbReference type="PIR" id="T10849">
    <property type="entry name" value="T10849"/>
</dbReference>
<dbReference type="RefSeq" id="NP_443891.1">
    <property type="nucleotide sequence ID" value="NC_000914.2"/>
</dbReference>
<dbReference type="RefSeq" id="WP_010875349.1">
    <property type="nucleotide sequence ID" value="NC_000914.2"/>
</dbReference>
<dbReference type="STRING" id="394.NGR_c17730"/>
<dbReference type="KEGG" id="rhi:NGR_a03350"/>
<dbReference type="PATRIC" id="fig|394.7.peg.344"/>
<dbReference type="eggNOG" id="COG3436">
    <property type="taxonomic scope" value="Bacteria"/>
</dbReference>
<dbReference type="HOGENOM" id="CLU_128110_1_1_5"/>
<dbReference type="OrthoDB" id="9801450at2"/>
<dbReference type="Proteomes" id="UP000001054">
    <property type="component" value="Plasmid pNGR234a"/>
</dbReference>
<dbReference type="InterPro" id="IPR008878">
    <property type="entry name" value="Transposase_IS66_Orf2"/>
</dbReference>
<dbReference type="NCBIfam" id="NF033819">
    <property type="entry name" value="IS66_TnpB"/>
    <property type="match status" value="1"/>
</dbReference>
<dbReference type="PANTHER" id="PTHR36455">
    <property type="match status" value="1"/>
</dbReference>
<dbReference type="PANTHER" id="PTHR36455:SF1">
    <property type="entry name" value="BLR8292 PROTEIN"/>
    <property type="match status" value="1"/>
</dbReference>
<dbReference type="Pfam" id="PF05717">
    <property type="entry name" value="TnpB_IS66"/>
    <property type="match status" value="1"/>
</dbReference>
<keyword id="KW-0614">Plasmid</keyword>
<keyword id="KW-1185">Reference proteome</keyword>
<reference key="1">
    <citation type="submission" date="1993-07" db="EMBL/GenBank/DDBJ databases">
        <authorList>
            <person name="Rochepeau P."/>
            <person name="Fellay R."/>
            <person name="Broughton W.J."/>
        </authorList>
    </citation>
    <scope>NUCLEOTIDE SEQUENCE [GENOMIC DNA]</scope>
</reference>
<reference key="2">
    <citation type="journal article" date="1997" name="Nature">
        <title>Molecular basis of symbiosis between Rhizobium and legumes.</title>
        <authorList>
            <person name="Freiberg C.A."/>
            <person name="Fellay R."/>
            <person name="Bairoch A."/>
            <person name="Broughton W.J."/>
            <person name="Rosenthal A."/>
            <person name="Perret X."/>
        </authorList>
    </citation>
    <scope>NUCLEOTIDE SEQUENCE [LARGE SCALE GENOMIC DNA]</scope>
    <source>
        <strain>NBRC 101917 / NGR234</strain>
    </source>
</reference>
<reference key="3">
    <citation type="journal article" date="2009" name="Appl. Environ. Microbiol.">
        <title>Rhizobium sp. strain NGR234 possesses a remarkable number of secretion systems.</title>
        <authorList>
            <person name="Schmeisser C."/>
            <person name="Liesegang H."/>
            <person name="Krysciak D."/>
            <person name="Bakkou N."/>
            <person name="Le Quere A."/>
            <person name="Wollherr A."/>
            <person name="Heinemeyer I."/>
            <person name="Morgenstern B."/>
            <person name="Pommerening-Roeser A."/>
            <person name="Flores M."/>
            <person name="Palacios R."/>
            <person name="Brenner S."/>
            <person name="Gottschalk G."/>
            <person name="Schmitz R.A."/>
            <person name="Broughton W.J."/>
            <person name="Perret X."/>
            <person name="Strittmatter A.W."/>
            <person name="Streit W.R."/>
        </authorList>
    </citation>
    <scope>NUCLEOTIDE SEQUENCE [LARGE SCALE GENOMIC DNA]</scope>
    <source>
        <strain>NBRC 101917 / NGR234</strain>
    </source>
</reference>